<accession>Q9RKM3</accession>
<sequence>MSTEPAPLLALDLTGTFAFGLNGALTAVRAARLDVVGVVVLGMITALGGGVIRDVLIDSLPPAAFLDWRYYTLAAAGGLLAFAVSRHLRRLEPAITVLDAVGLSTFAVIGASKALDAGLAVVPAMLLGVITAVGGGTIRDTLVGRIPTVLRTGLYAIPALAGAAVTVATTETGVYGLPAALGAAAVCFLIRMLGLHFGINAPEPPETRPSGGGTRRQK</sequence>
<dbReference type="EMBL" id="AL939118">
    <property type="protein sequence ID" value="CAB56385.1"/>
    <property type="molecule type" value="Genomic_DNA"/>
</dbReference>
<dbReference type="RefSeq" id="NP_628284.1">
    <property type="nucleotide sequence ID" value="NC_003888.3"/>
</dbReference>
<dbReference type="RefSeq" id="WP_011029436.1">
    <property type="nucleotide sequence ID" value="NZ_VNID01000030.1"/>
</dbReference>
<dbReference type="SMR" id="Q9RKM3"/>
<dbReference type="STRING" id="100226.gene:17761744"/>
<dbReference type="TCDB" id="1.A.62.3.2">
    <property type="family name" value="the homotrimeric cation channel (tric) family"/>
</dbReference>
<dbReference type="PaxDb" id="100226-SCO4104"/>
<dbReference type="KEGG" id="sco:SCO4104"/>
<dbReference type="PATRIC" id="fig|100226.15.peg.4163"/>
<dbReference type="eggNOG" id="COG2860">
    <property type="taxonomic scope" value="Bacteria"/>
</dbReference>
<dbReference type="HOGENOM" id="CLU_064906_1_1_11"/>
<dbReference type="InParanoid" id="Q9RKM3"/>
<dbReference type="OrthoDB" id="9791874at2"/>
<dbReference type="PhylomeDB" id="Q9RKM3"/>
<dbReference type="Proteomes" id="UP000001973">
    <property type="component" value="Chromosome"/>
</dbReference>
<dbReference type="GO" id="GO:0005886">
    <property type="term" value="C:plasma membrane"/>
    <property type="evidence" value="ECO:0000318"/>
    <property type="project" value="GO_Central"/>
</dbReference>
<dbReference type="InterPro" id="IPR005115">
    <property type="entry name" value="Gly_transporter"/>
</dbReference>
<dbReference type="PANTHER" id="PTHR30506">
    <property type="entry name" value="INNER MEMBRANE PROTEIN"/>
    <property type="match status" value="1"/>
</dbReference>
<dbReference type="PANTHER" id="PTHR30506:SF3">
    <property type="entry name" value="UPF0126 INNER MEMBRANE PROTEIN YADS-RELATED"/>
    <property type="match status" value="1"/>
</dbReference>
<dbReference type="Pfam" id="PF03458">
    <property type="entry name" value="Gly_transporter"/>
    <property type="match status" value="2"/>
</dbReference>
<feature type="chain" id="PRO_0000166308" description="UPF0126 membrane protein SCO4104">
    <location>
        <begin position="1"/>
        <end position="218"/>
    </location>
</feature>
<feature type="transmembrane region" description="Helical" evidence="1">
    <location>
        <begin position="8"/>
        <end position="28"/>
    </location>
</feature>
<feature type="transmembrane region" description="Helical" evidence="1">
    <location>
        <begin position="37"/>
        <end position="57"/>
    </location>
</feature>
<feature type="transmembrane region" description="Helical" evidence="1">
    <location>
        <begin position="64"/>
        <end position="84"/>
    </location>
</feature>
<feature type="transmembrane region" description="Helical" evidence="1">
    <location>
        <begin position="91"/>
        <end position="111"/>
    </location>
</feature>
<feature type="transmembrane region" description="Helical" evidence="1">
    <location>
        <begin position="118"/>
        <end position="138"/>
    </location>
</feature>
<feature type="transmembrane region" description="Helical" evidence="1">
    <location>
        <begin position="154"/>
        <end position="174"/>
    </location>
</feature>
<feature type="transmembrane region" description="Helical" evidence="1">
    <location>
        <begin position="179"/>
        <end position="199"/>
    </location>
</feature>
<comment type="subcellular location">
    <subcellularLocation>
        <location evidence="2">Cell membrane</location>
        <topology evidence="2">Multi-pass membrane protein</topology>
    </subcellularLocation>
</comment>
<comment type="similarity">
    <text evidence="2">Belongs to the UPF0126 family.</text>
</comment>
<name>Y4104_STRCO</name>
<gene>
    <name type="ordered locus">SCO4104</name>
    <name type="ORF">SCD17.08c</name>
</gene>
<evidence type="ECO:0000255" key="1"/>
<evidence type="ECO:0000305" key="2"/>
<proteinExistence type="inferred from homology"/>
<organism>
    <name type="scientific">Streptomyces coelicolor (strain ATCC BAA-471 / A3(2) / M145)</name>
    <dbReference type="NCBI Taxonomy" id="100226"/>
    <lineage>
        <taxon>Bacteria</taxon>
        <taxon>Bacillati</taxon>
        <taxon>Actinomycetota</taxon>
        <taxon>Actinomycetes</taxon>
        <taxon>Kitasatosporales</taxon>
        <taxon>Streptomycetaceae</taxon>
        <taxon>Streptomyces</taxon>
        <taxon>Streptomyces albidoflavus group</taxon>
    </lineage>
</organism>
<protein>
    <recommendedName>
        <fullName>UPF0126 membrane protein SCO4104</fullName>
    </recommendedName>
</protein>
<reference key="1">
    <citation type="journal article" date="2002" name="Nature">
        <title>Complete genome sequence of the model actinomycete Streptomyces coelicolor A3(2).</title>
        <authorList>
            <person name="Bentley S.D."/>
            <person name="Chater K.F."/>
            <person name="Cerdeno-Tarraga A.-M."/>
            <person name="Challis G.L."/>
            <person name="Thomson N.R."/>
            <person name="James K.D."/>
            <person name="Harris D.E."/>
            <person name="Quail M.A."/>
            <person name="Kieser H."/>
            <person name="Harper D."/>
            <person name="Bateman A."/>
            <person name="Brown S."/>
            <person name="Chandra G."/>
            <person name="Chen C.W."/>
            <person name="Collins M."/>
            <person name="Cronin A."/>
            <person name="Fraser A."/>
            <person name="Goble A."/>
            <person name="Hidalgo J."/>
            <person name="Hornsby T."/>
            <person name="Howarth S."/>
            <person name="Huang C.-H."/>
            <person name="Kieser T."/>
            <person name="Larke L."/>
            <person name="Murphy L.D."/>
            <person name="Oliver K."/>
            <person name="O'Neil S."/>
            <person name="Rabbinowitsch E."/>
            <person name="Rajandream M.A."/>
            <person name="Rutherford K.M."/>
            <person name="Rutter S."/>
            <person name="Seeger K."/>
            <person name="Saunders D."/>
            <person name="Sharp S."/>
            <person name="Squares R."/>
            <person name="Squares S."/>
            <person name="Taylor K."/>
            <person name="Warren T."/>
            <person name="Wietzorrek A."/>
            <person name="Woodward J.R."/>
            <person name="Barrell B.G."/>
            <person name="Parkhill J."/>
            <person name="Hopwood D.A."/>
        </authorList>
    </citation>
    <scope>NUCLEOTIDE SEQUENCE [LARGE SCALE GENOMIC DNA]</scope>
    <source>
        <strain>ATCC BAA-471 / A3(2) / M145</strain>
    </source>
</reference>
<keyword id="KW-1003">Cell membrane</keyword>
<keyword id="KW-0472">Membrane</keyword>
<keyword id="KW-1185">Reference proteome</keyword>
<keyword id="KW-0812">Transmembrane</keyword>
<keyword id="KW-1133">Transmembrane helix</keyword>